<name>OEC6_SPIOL</name>
<evidence type="ECO:0000255" key="1"/>
<evidence type="ECO:0000269" key="2">
    <source>
    </source>
</evidence>
<keyword id="KW-0150">Chloroplast</keyword>
<keyword id="KW-0472">Membrane</keyword>
<keyword id="KW-0934">Plastid</keyword>
<keyword id="KW-1002">Plastid outer membrane</keyword>
<keyword id="KW-1185">Reference proteome</keyword>
<keyword id="KW-0812">Transmembrane</keyword>
<keyword id="KW-1133">Transmembrane helix</keyword>
<proteinExistence type="evidence at protein level"/>
<organism>
    <name type="scientific">Spinacia oleracea</name>
    <name type="common">Spinach</name>
    <dbReference type="NCBI Taxonomy" id="3562"/>
    <lineage>
        <taxon>Eukaryota</taxon>
        <taxon>Viridiplantae</taxon>
        <taxon>Streptophyta</taxon>
        <taxon>Embryophyta</taxon>
        <taxon>Tracheophyta</taxon>
        <taxon>Spermatophyta</taxon>
        <taxon>Magnoliopsida</taxon>
        <taxon>eudicotyledons</taxon>
        <taxon>Gunneridae</taxon>
        <taxon>Pentapetalae</taxon>
        <taxon>Caryophyllales</taxon>
        <taxon>Chenopodiaceae</taxon>
        <taxon>Chenopodioideae</taxon>
        <taxon>Anserineae</taxon>
        <taxon>Spinacia</taxon>
    </lineage>
</organism>
<feature type="chain" id="PRO_0000058028" description="6.7 kDa chloroplast outer envelope membrane protein">
    <location>
        <begin position="1"/>
        <end position="62"/>
    </location>
</feature>
<feature type="topological domain" description="Chloroplast intermembrane">
    <location>
        <begin position="1"/>
        <end position="17"/>
    </location>
</feature>
<feature type="transmembrane region" description="Helical" evidence="1">
    <location>
        <begin position="18"/>
        <end position="40"/>
    </location>
</feature>
<feature type="topological domain" description="Cytoplasmic">
    <location>
        <begin position="41"/>
        <end position="62"/>
    </location>
</feature>
<sequence>MESVAKPATTKEGSAKQAAIVVGVLALGWFAIQVAFIPLFNKVRGGGSDKKDDDVNAFTPDT</sequence>
<comment type="subcellular location">
    <subcellularLocation>
        <location evidence="2">Plastid</location>
        <location evidence="2">Chloroplast outer membrane</location>
        <topology evidence="2">Single-pass membrane protein</topology>
    </subcellularLocation>
</comment>
<dbReference type="EMBL" id="M35665">
    <property type="protein sequence ID" value="AAA34034.1"/>
    <property type="molecule type" value="mRNA"/>
</dbReference>
<dbReference type="EMBL" id="M36587">
    <property type="protein sequence ID" value="AAA34035.1"/>
    <property type="molecule type" value="mRNA"/>
</dbReference>
<dbReference type="PIR" id="A35958">
    <property type="entry name" value="A35958"/>
</dbReference>
<dbReference type="SMR" id="P19407"/>
<dbReference type="Proteomes" id="UP001155700">
    <property type="component" value="Unplaced"/>
</dbReference>
<dbReference type="GO" id="GO:0009707">
    <property type="term" value="C:chloroplast outer membrane"/>
    <property type="evidence" value="ECO:0007669"/>
    <property type="project" value="UniProtKB-SubCell"/>
</dbReference>
<protein>
    <recommendedName>
        <fullName>6.7 kDa chloroplast outer envelope membrane protein</fullName>
    </recommendedName>
    <alternativeName>
        <fullName>E 6.7</fullName>
    </alternativeName>
</protein>
<reference key="1">
    <citation type="journal article" date="1990" name="Proc. Natl. Acad. Sci. U.S.A.">
        <title>Sequence analysis and protein import studies of an outer chloroplast envelope polypeptide.</title>
        <authorList>
            <person name="Salomon M."/>
            <person name="Fischer K."/>
            <person name="Fluegge U.-I."/>
            <person name="Soll J."/>
        </authorList>
    </citation>
    <scope>NUCLEOTIDE SEQUENCE [MRNA]</scope>
    <scope>CHARACTERIZATION</scope>
    <scope>SUBCELLULAR LOCATION</scope>
</reference>
<accession>P19407</accession>